<evidence type="ECO:0000250" key="1"/>
<evidence type="ECO:0000250" key="2">
    <source>
        <dbReference type="UniProtKB" id="Q96CU9"/>
    </source>
</evidence>
<evidence type="ECO:0000255" key="3"/>
<evidence type="ECO:0000303" key="4">
    <source>
    </source>
</evidence>
<evidence type="ECO:0000303" key="5">
    <source>
    </source>
</evidence>
<name>FXRD1_MOUSE</name>
<keyword id="KW-0025">Alternative splicing</keyword>
<keyword id="KW-0249">Electron transport</keyword>
<keyword id="KW-0274">FAD</keyword>
<keyword id="KW-0285">Flavoprotein</keyword>
<keyword id="KW-0472">Membrane</keyword>
<keyword id="KW-0496">Mitochondrion</keyword>
<keyword id="KW-0999">Mitochondrion inner membrane</keyword>
<keyword id="KW-0560">Oxidoreductase</keyword>
<keyword id="KW-1185">Reference proteome</keyword>
<keyword id="KW-0679">Respiratory chain</keyword>
<keyword id="KW-0812">Transmembrane</keyword>
<keyword id="KW-1133">Transmembrane helix</keyword>
<keyword id="KW-0813">Transport</keyword>
<proteinExistence type="evidence at protein level"/>
<accession>Q3TQB2</accession>
<accession>Q8R1D0</accession>
<sequence length="487" mass="54178">MFRRALRLGLGPGLPYRGLRTRKGGFTLDWDAKVSDFKKKVDSILPGKKYEVLYDTSHLPPEQADVVIIGGGILGLSVAFWLKKLESRRGAIRVLVVEQDHTYSRASSTGPSVGGIWQQFSVPENVQLSLFSINFLRNINEYLAVVDAPPVELQFNPSGCLLLASEKDAATLENNVKMQRQEGAKVCLMSPEQLQTKFPWINVEGVALASYGLEDEGWFDAWSLLQGLRRKVQSMGVFFCQGEVTRFITSSTPMKTPTGEHVVLRRINNVHVKMDKSLEYQPVECAVVINAAGAWSGKIAELAGVGKGLPGTLQGTKLPVEPRKRYVHLWHCPQGPGLETPLVADISGVYFRREGLGSNYLGGCSPTEEEEPDPTNLNVDHDFFQNKVWPHLVQRVPSFKTLEVQSAWAGYYDYNTFDQNGVVGPHPLVVNMYFATGFSGRGLQHAPGIGRAVAEIMLEGHFKTIDMSPFLFTRFYLGEKLQEYNIL</sequence>
<dbReference type="EC" id="1.-.-.-"/>
<dbReference type="EMBL" id="AK144759">
    <property type="protein sequence ID" value="BAE26052.1"/>
    <property type="molecule type" value="mRNA"/>
</dbReference>
<dbReference type="EMBL" id="AK163722">
    <property type="protein sequence ID" value="BAE37472.1"/>
    <property type="molecule type" value="mRNA"/>
</dbReference>
<dbReference type="EMBL" id="BC024806">
    <property type="protein sequence ID" value="AAH24806.1"/>
    <property type="molecule type" value="mRNA"/>
</dbReference>
<dbReference type="CCDS" id="CCDS22958.1">
    <molecule id="Q3TQB2-2"/>
</dbReference>
<dbReference type="CCDS" id="CCDS80974.1">
    <molecule id="Q3TQB2-1"/>
</dbReference>
<dbReference type="RefSeq" id="NP_001278377.1">
    <molecule id="Q3TQB2-1"/>
    <property type="nucleotide sequence ID" value="NM_001291448.2"/>
</dbReference>
<dbReference type="RefSeq" id="NP_758495.1">
    <molecule id="Q3TQB2-2"/>
    <property type="nucleotide sequence ID" value="NM_172291.3"/>
</dbReference>
<dbReference type="SMR" id="Q3TQB2"/>
<dbReference type="FunCoup" id="Q3TQB2">
    <property type="interactions" value="1434"/>
</dbReference>
<dbReference type="STRING" id="10090.ENSMUSP00000038924"/>
<dbReference type="iPTMnet" id="Q3TQB2"/>
<dbReference type="PhosphoSitePlus" id="Q3TQB2"/>
<dbReference type="PaxDb" id="10090-ENSMUSP00000038924"/>
<dbReference type="PeptideAtlas" id="Q3TQB2"/>
<dbReference type="ProteomicsDB" id="271618">
    <molecule id="Q3TQB2-1"/>
</dbReference>
<dbReference type="ProteomicsDB" id="271619">
    <molecule id="Q3TQB2-2"/>
</dbReference>
<dbReference type="Pumba" id="Q3TQB2"/>
<dbReference type="Antibodypedia" id="32986">
    <property type="antibodies" value="164 antibodies from 27 providers"/>
</dbReference>
<dbReference type="DNASU" id="235169"/>
<dbReference type="Ensembl" id="ENSMUST00000043805.15">
    <molecule id="Q3TQB2-2"/>
    <property type="protein sequence ID" value="ENSMUSP00000038924.9"/>
    <property type="gene ID" value="ENSMUSG00000039048.16"/>
</dbReference>
<dbReference type="Ensembl" id="ENSMUST00000127996.8">
    <molecule id="Q3TQB2-1"/>
    <property type="protein sequence ID" value="ENSMUSP00000118037.2"/>
    <property type="gene ID" value="ENSMUSG00000039048.16"/>
</dbReference>
<dbReference type="GeneID" id="235169"/>
<dbReference type="KEGG" id="mmu:235169"/>
<dbReference type="UCSC" id="uc009ost.2">
    <molecule id="Q3TQB2-2"/>
    <property type="organism name" value="mouse"/>
</dbReference>
<dbReference type="UCSC" id="uc009osu.2">
    <molecule id="Q3TQB2-1"/>
    <property type="organism name" value="mouse"/>
</dbReference>
<dbReference type="AGR" id="MGI:2446262"/>
<dbReference type="CTD" id="55572"/>
<dbReference type="MGI" id="MGI:2446262">
    <property type="gene designation" value="Foxred1"/>
</dbReference>
<dbReference type="VEuPathDB" id="HostDB:ENSMUSG00000039048"/>
<dbReference type="eggNOG" id="KOG2853">
    <property type="taxonomic scope" value="Eukaryota"/>
</dbReference>
<dbReference type="GeneTree" id="ENSGT00390000006114"/>
<dbReference type="HOGENOM" id="CLU_007884_4_4_1"/>
<dbReference type="InParanoid" id="Q3TQB2"/>
<dbReference type="OMA" id="PDHNALI"/>
<dbReference type="OrthoDB" id="58811at9989"/>
<dbReference type="PhylomeDB" id="Q3TQB2"/>
<dbReference type="TreeFam" id="TF314003"/>
<dbReference type="BioGRID-ORCS" id="235169">
    <property type="hits" value="25 hits in 79 CRISPR screens"/>
</dbReference>
<dbReference type="ChiTaRS" id="Foxred1">
    <property type="organism name" value="mouse"/>
</dbReference>
<dbReference type="PRO" id="PR:Q3TQB2"/>
<dbReference type="Proteomes" id="UP000000589">
    <property type="component" value="Chromosome 9"/>
</dbReference>
<dbReference type="RNAct" id="Q3TQB2">
    <property type="molecule type" value="protein"/>
</dbReference>
<dbReference type="Bgee" id="ENSMUSG00000039048">
    <property type="expression patterns" value="Expressed in spermatocyte and 257 other cell types or tissues"/>
</dbReference>
<dbReference type="ExpressionAtlas" id="Q3TQB2">
    <property type="expression patterns" value="baseline and differential"/>
</dbReference>
<dbReference type="GO" id="GO:0005743">
    <property type="term" value="C:mitochondrial inner membrane"/>
    <property type="evidence" value="ECO:0000250"/>
    <property type="project" value="UniProtKB"/>
</dbReference>
<dbReference type="GO" id="GO:0005739">
    <property type="term" value="C:mitochondrion"/>
    <property type="evidence" value="ECO:0007005"/>
    <property type="project" value="MGI"/>
</dbReference>
<dbReference type="GO" id="GO:0016491">
    <property type="term" value="F:oxidoreductase activity"/>
    <property type="evidence" value="ECO:0007669"/>
    <property type="project" value="UniProtKB-KW"/>
</dbReference>
<dbReference type="GO" id="GO:0032981">
    <property type="term" value="P:mitochondrial respiratory chain complex I assembly"/>
    <property type="evidence" value="ECO:0000250"/>
    <property type="project" value="UniProtKB"/>
</dbReference>
<dbReference type="FunFam" id="3.30.9.10:FF:000155">
    <property type="entry name" value="FAD-dependent oxidoreductase domain-containing 1"/>
    <property type="match status" value="1"/>
</dbReference>
<dbReference type="Gene3D" id="3.30.9.10">
    <property type="entry name" value="D-Amino Acid Oxidase, subunit A, domain 2"/>
    <property type="match status" value="1"/>
</dbReference>
<dbReference type="Gene3D" id="3.50.50.60">
    <property type="entry name" value="FAD/NAD(P)-binding domain"/>
    <property type="match status" value="1"/>
</dbReference>
<dbReference type="InterPro" id="IPR006076">
    <property type="entry name" value="FAD-dep_OxRdtase"/>
</dbReference>
<dbReference type="InterPro" id="IPR036188">
    <property type="entry name" value="FAD/NAD-bd_sf"/>
</dbReference>
<dbReference type="PANTHER" id="PTHR13847:SF287">
    <property type="entry name" value="FAD-DEPENDENT OXIDOREDUCTASE DOMAIN-CONTAINING PROTEIN 1"/>
    <property type="match status" value="1"/>
</dbReference>
<dbReference type="PANTHER" id="PTHR13847">
    <property type="entry name" value="SARCOSINE DEHYDROGENASE-RELATED"/>
    <property type="match status" value="1"/>
</dbReference>
<dbReference type="Pfam" id="PF01266">
    <property type="entry name" value="DAO"/>
    <property type="match status" value="1"/>
</dbReference>
<dbReference type="SUPFAM" id="SSF51905">
    <property type="entry name" value="FAD/NAD(P)-binding domain"/>
    <property type="match status" value="1"/>
</dbReference>
<feature type="chain" id="PRO_0000274144" description="FAD-dependent oxidoreductase domain-containing protein 1">
    <location>
        <begin position="1"/>
        <end position="487"/>
    </location>
</feature>
<feature type="transmembrane region" description="Helical" evidence="3">
    <location>
        <begin position="62"/>
        <end position="82"/>
    </location>
</feature>
<feature type="splice variant" id="VSP_022630" description="In isoform 2." evidence="4 5">
    <original>E</original>
    <variation>EHLLHLQ</variation>
    <location>
        <position position="403"/>
    </location>
</feature>
<comment type="function">
    <text evidence="2">Required for the assembly of the mitochondrial membrane respiratory chain NADH dehydrogenase (Complex I). Involved in mid-late stages of complex I assembly.</text>
</comment>
<comment type="cofactor">
    <cofactor evidence="1">
        <name>FAD</name>
        <dbReference type="ChEBI" id="CHEBI:57692"/>
    </cofactor>
</comment>
<comment type="subunit">
    <text evidence="2">Associates with components of the mitochondrial respiratory chain complex I.</text>
</comment>
<comment type="subcellular location">
    <subcellularLocation>
        <location evidence="2">Mitochondrion inner membrane</location>
        <topology evidence="3">Single-pass membrane protein</topology>
    </subcellularLocation>
</comment>
<comment type="alternative products">
    <event type="alternative splicing"/>
    <isoform>
        <id>Q3TQB2-1</id>
        <name>1</name>
        <sequence type="displayed"/>
    </isoform>
    <isoform>
        <id>Q3TQB2-2</id>
        <name>2</name>
        <sequence type="described" ref="VSP_022630"/>
    </isoform>
</comment>
<protein>
    <recommendedName>
        <fullName>FAD-dependent oxidoreductase domain-containing protein 1</fullName>
        <ecNumber>1.-.-.-</ecNumber>
    </recommendedName>
</protein>
<organism>
    <name type="scientific">Mus musculus</name>
    <name type="common">Mouse</name>
    <dbReference type="NCBI Taxonomy" id="10090"/>
    <lineage>
        <taxon>Eukaryota</taxon>
        <taxon>Metazoa</taxon>
        <taxon>Chordata</taxon>
        <taxon>Craniata</taxon>
        <taxon>Vertebrata</taxon>
        <taxon>Euteleostomi</taxon>
        <taxon>Mammalia</taxon>
        <taxon>Eutheria</taxon>
        <taxon>Euarchontoglires</taxon>
        <taxon>Glires</taxon>
        <taxon>Rodentia</taxon>
        <taxon>Myomorpha</taxon>
        <taxon>Muroidea</taxon>
        <taxon>Muridae</taxon>
        <taxon>Murinae</taxon>
        <taxon>Mus</taxon>
        <taxon>Mus</taxon>
    </lineage>
</organism>
<reference key="1">
    <citation type="journal article" date="2005" name="Science">
        <title>The transcriptional landscape of the mammalian genome.</title>
        <authorList>
            <person name="Carninci P."/>
            <person name="Kasukawa T."/>
            <person name="Katayama S."/>
            <person name="Gough J."/>
            <person name="Frith M.C."/>
            <person name="Maeda N."/>
            <person name="Oyama R."/>
            <person name="Ravasi T."/>
            <person name="Lenhard B."/>
            <person name="Wells C."/>
            <person name="Kodzius R."/>
            <person name="Shimokawa K."/>
            <person name="Bajic V.B."/>
            <person name="Brenner S.E."/>
            <person name="Batalov S."/>
            <person name="Forrest A.R."/>
            <person name="Zavolan M."/>
            <person name="Davis M.J."/>
            <person name="Wilming L.G."/>
            <person name="Aidinis V."/>
            <person name="Allen J.E."/>
            <person name="Ambesi-Impiombato A."/>
            <person name="Apweiler R."/>
            <person name="Aturaliya R.N."/>
            <person name="Bailey T.L."/>
            <person name="Bansal M."/>
            <person name="Baxter L."/>
            <person name="Beisel K.W."/>
            <person name="Bersano T."/>
            <person name="Bono H."/>
            <person name="Chalk A.M."/>
            <person name="Chiu K.P."/>
            <person name="Choudhary V."/>
            <person name="Christoffels A."/>
            <person name="Clutterbuck D.R."/>
            <person name="Crowe M.L."/>
            <person name="Dalla E."/>
            <person name="Dalrymple B.P."/>
            <person name="de Bono B."/>
            <person name="Della Gatta G."/>
            <person name="di Bernardo D."/>
            <person name="Down T."/>
            <person name="Engstrom P."/>
            <person name="Fagiolini M."/>
            <person name="Faulkner G."/>
            <person name="Fletcher C.F."/>
            <person name="Fukushima T."/>
            <person name="Furuno M."/>
            <person name="Futaki S."/>
            <person name="Gariboldi M."/>
            <person name="Georgii-Hemming P."/>
            <person name="Gingeras T.R."/>
            <person name="Gojobori T."/>
            <person name="Green R.E."/>
            <person name="Gustincich S."/>
            <person name="Harbers M."/>
            <person name="Hayashi Y."/>
            <person name="Hensch T.K."/>
            <person name="Hirokawa N."/>
            <person name="Hill D."/>
            <person name="Huminiecki L."/>
            <person name="Iacono M."/>
            <person name="Ikeo K."/>
            <person name="Iwama A."/>
            <person name="Ishikawa T."/>
            <person name="Jakt M."/>
            <person name="Kanapin A."/>
            <person name="Katoh M."/>
            <person name="Kawasawa Y."/>
            <person name="Kelso J."/>
            <person name="Kitamura H."/>
            <person name="Kitano H."/>
            <person name="Kollias G."/>
            <person name="Krishnan S.P."/>
            <person name="Kruger A."/>
            <person name="Kummerfeld S.K."/>
            <person name="Kurochkin I.V."/>
            <person name="Lareau L.F."/>
            <person name="Lazarevic D."/>
            <person name="Lipovich L."/>
            <person name="Liu J."/>
            <person name="Liuni S."/>
            <person name="McWilliam S."/>
            <person name="Madan Babu M."/>
            <person name="Madera M."/>
            <person name="Marchionni L."/>
            <person name="Matsuda H."/>
            <person name="Matsuzawa S."/>
            <person name="Miki H."/>
            <person name="Mignone F."/>
            <person name="Miyake S."/>
            <person name="Morris K."/>
            <person name="Mottagui-Tabar S."/>
            <person name="Mulder N."/>
            <person name="Nakano N."/>
            <person name="Nakauchi H."/>
            <person name="Ng P."/>
            <person name="Nilsson R."/>
            <person name="Nishiguchi S."/>
            <person name="Nishikawa S."/>
            <person name="Nori F."/>
            <person name="Ohara O."/>
            <person name="Okazaki Y."/>
            <person name="Orlando V."/>
            <person name="Pang K.C."/>
            <person name="Pavan W.J."/>
            <person name="Pavesi G."/>
            <person name="Pesole G."/>
            <person name="Petrovsky N."/>
            <person name="Piazza S."/>
            <person name="Reed J."/>
            <person name="Reid J.F."/>
            <person name="Ring B.Z."/>
            <person name="Ringwald M."/>
            <person name="Rost B."/>
            <person name="Ruan Y."/>
            <person name="Salzberg S.L."/>
            <person name="Sandelin A."/>
            <person name="Schneider C."/>
            <person name="Schoenbach C."/>
            <person name="Sekiguchi K."/>
            <person name="Semple C.A."/>
            <person name="Seno S."/>
            <person name="Sessa L."/>
            <person name="Sheng Y."/>
            <person name="Shibata Y."/>
            <person name="Shimada H."/>
            <person name="Shimada K."/>
            <person name="Silva D."/>
            <person name="Sinclair B."/>
            <person name="Sperling S."/>
            <person name="Stupka E."/>
            <person name="Sugiura K."/>
            <person name="Sultana R."/>
            <person name="Takenaka Y."/>
            <person name="Taki K."/>
            <person name="Tammoja K."/>
            <person name="Tan S.L."/>
            <person name="Tang S."/>
            <person name="Taylor M.S."/>
            <person name="Tegner J."/>
            <person name="Teichmann S.A."/>
            <person name="Ueda H.R."/>
            <person name="van Nimwegen E."/>
            <person name="Verardo R."/>
            <person name="Wei C.L."/>
            <person name="Yagi K."/>
            <person name="Yamanishi H."/>
            <person name="Zabarovsky E."/>
            <person name="Zhu S."/>
            <person name="Zimmer A."/>
            <person name="Hide W."/>
            <person name="Bult C."/>
            <person name="Grimmond S.M."/>
            <person name="Teasdale R.D."/>
            <person name="Liu E.T."/>
            <person name="Brusic V."/>
            <person name="Quackenbush J."/>
            <person name="Wahlestedt C."/>
            <person name="Mattick J.S."/>
            <person name="Hume D.A."/>
            <person name="Kai C."/>
            <person name="Sasaki D."/>
            <person name="Tomaru Y."/>
            <person name="Fukuda S."/>
            <person name="Kanamori-Katayama M."/>
            <person name="Suzuki M."/>
            <person name="Aoki J."/>
            <person name="Arakawa T."/>
            <person name="Iida J."/>
            <person name="Imamura K."/>
            <person name="Itoh M."/>
            <person name="Kato T."/>
            <person name="Kawaji H."/>
            <person name="Kawagashira N."/>
            <person name="Kawashima T."/>
            <person name="Kojima M."/>
            <person name="Kondo S."/>
            <person name="Konno H."/>
            <person name="Nakano K."/>
            <person name="Ninomiya N."/>
            <person name="Nishio T."/>
            <person name="Okada M."/>
            <person name="Plessy C."/>
            <person name="Shibata K."/>
            <person name="Shiraki T."/>
            <person name="Suzuki S."/>
            <person name="Tagami M."/>
            <person name="Waki K."/>
            <person name="Watahiki A."/>
            <person name="Okamura-Oho Y."/>
            <person name="Suzuki H."/>
            <person name="Kawai J."/>
            <person name="Hayashizaki Y."/>
        </authorList>
    </citation>
    <scope>NUCLEOTIDE SEQUENCE [LARGE SCALE MRNA] (ISOFORMS 1 AND 2)</scope>
    <source>
        <strain>C57BL/6J</strain>
        <tissue>Cerebellum</tissue>
        <tissue>Lung</tissue>
    </source>
</reference>
<reference key="2">
    <citation type="journal article" date="2004" name="Genome Res.">
        <title>The status, quality, and expansion of the NIH full-length cDNA project: the Mammalian Gene Collection (MGC).</title>
        <authorList>
            <consortium name="The MGC Project Team"/>
        </authorList>
    </citation>
    <scope>NUCLEOTIDE SEQUENCE [LARGE SCALE MRNA] (ISOFORM 2)</scope>
    <source>
        <tissue>Eye</tissue>
    </source>
</reference>
<reference key="3">
    <citation type="journal article" date="2010" name="Cell">
        <title>A tissue-specific atlas of mouse protein phosphorylation and expression.</title>
        <authorList>
            <person name="Huttlin E.L."/>
            <person name="Jedrychowski M.P."/>
            <person name="Elias J.E."/>
            <person name="Goswami T."/>
            <person name="Rad R."/>
            <person name="Beausoleil S.A."/>
            <person name="Villen J."/>
            <person name="Haas W."/>
            <person name="Sowa M.E."/>
            <person name="Gygi S.P."/>
        </authorList>
    </citation>
    <scope>IDENTIFICATION BY MASS SPECTROMETRY [LARGE SCALE ANALYSIS]</scope>
    <source>
        <tissue>Kidney</tissue>
    </source>
</reference>
<gene>
    <name type="primary">Foxred1</name>
</gene>